<dbReference type="EC" id="2.3.2.23"/>
<dbReference type="EMBL" id="AC019018">
    <property type="protein sequence ID" value="AAG52279.1"/>
    <property type="status" value="ALT_SEQ"/>
    <property type="molecule type" value="Genomic_DNA"/>
</dbReference>
<dbReference type="EMBL" id="CP002684">
    <property type="protein sequence ID" value="AEE32877.1"/>
    <property type="molecule type" value="Genomic_DNA"/>
</dbReference>
<dbReference type="RefSeq" id="NP_001185206.1">
    <property type="nucleotide sequence ID" value="NM_001198277.1"/>
</dbReference>
<dbReference type="SMR" id="F4HPP7"/>
<dbReference type="FunCoup" id="F4HPP7">
    <property type="interactions" value="20"/>
</dbReference>
<dbReference type="STRING" id="3702.F4HPP7"/>
<dbReference type="PaxDb" id="3702-AT1G53023.1"/>
<dbReference type="EnsemblPlants" id="AT1G53023.1">
    <property type="protein sequence ID" value="AT1G53023.1"/>
    <property type="gene ID" value="AT1G53023"/>
</dbReference>
<dbReference type="GeneID" id="10723074"/>
<dbReference type="Gramene" id="AT1G53023.1">
    <property type="protein sequence ID" value="AT1G53023.1"/>
    <property type="gene ID" value="AT1G53023"/>
</dbReference>
<dbReference type="KEGG" id="ath:AT1G53023"/>
<dbReference type="Araport" id="AT1G53023"/>
<dbReference type="TAIR" id="AT1G53023"/>
<dbReference type="eggNOG" id="KOG0895">
    <property type="taxonomic scope" value="Eukaryota"/>
</dbReference>
<dbReference type="HOGENOM" id="CLU_025097_0_0_1"/>
<dbReference type="InParanoid" id="F4HPP7"/>
<dbReference type="OMA" id="NTRENWL"/>
<dbReference type="UniPathway" id="UPA00143"/>
<dbReference type="PRO" id="PR:F4HPP7"/>
<dbReference type="Proteomes" id="UP000006548">
    <property type="component" value="Chromosome 1"/>
</dbReference>
<dbReference type="ExpressionAtlas" id="F4HPP7">
    <property type="expression patterns" value="baseline and differential"/>
</dbReference>
<dbReference type="GO" id="GO:0005524">
    <property type="term" value="F:ATP binding"/>
    <property type="evidence" value="ECO:0007669"/>
    <property type="project" value="UniProtKB-KW"/>
</dbReference>
<dbReference type="GO" id="GO:0061631">
    <property type="term" value="F:ubiquitin conjugating enzyme activity"/>
    <property type="evidence" value="ECO:0007669"/>
    <property type="project" value="UniProtKB-EC"/>
</dbReference>
<dbReference type="GO" id="GO:0016567">
    <property type="term" value="P:protein ubiquitination"/>
    <property type="evidence" value="ECO:0007669"/>
    <property type="project" value="UniProtKB-UniPathway"/>
</dbReference>
<dbReference type="CDD" id="cd23837">
    <property type="entry name" value="UBCc_UBE2O"/>
    <property type="match status" value="1"/>
</dbReference>
<dbReference type="FunFam" id="3.10.110.10:FF:000028">
    <property type="entry name" value="Probable ubiquitin-conjugating enzyme E2 23"/>
    <property type="match status" value="1"/>
</dbReference>
<dbReference type="Gene3D" id="3.10.110.10">
    <property type="entry name" value="Ubiquitin Conjugating Enzyme"/>
    <property type="match status" value="1"/>
</dbReference>
<dbReference type="InterPro" id="IPR000608">
    <property type="entry name" value="UBQ-conjugat_E2_core"/>
</dbReference>
<dbReference type="InterPro" id="IPR016135">
    <property type="entry name" value="UBQ-conjugating_enzyme/RWD"/>
</dbReference>
<dbReference type="PANTHER" id="PTHR46116">
    <property type="entry name" value="(E3-INDEPENDENT) E2 UBIQUITIN-CONJUGATING ENZYME"/>
    <property type="match status" value="1"/>
</dbReference>
<dbReference type="PANTHER" id="PTHR46116:SF22">
    <property type="entry name" value="UBIQUITIN-CONJUGATING ENZYME E2 26-RELATED"/>
    <property type="match status" value="1"/>
</dbReference>
<dbReference type="Pfam" id="PF00179">
    <property type="entry name" value="UQ_con"/>
    <property type="match status" value="1"/>
</dbReference>
<dbReference type="SMART" id="SM00212">
    <property type="entry name" value="UBCc"/>
    <property type="match status" value="1"/>
</dbReference>
<dbReference type="SUPFAM" id="SSF54495">
    <property type="entry name" value="UBC-like"/>
    <property type="match status" value="1"/>
</dbReference>
<dbReference type="PROSITE" id="PS50127">
    <property type="entry name" value="UBC_2"/>
    <property type="match status" value="1"/>
</dbReference>
<feature type="chain" id="PRO_0000430143" description="Putative ubiquitin-conjugating enzyme E2 39">
    <location>
        <begin position="1"/>
        <end position="316"/>
    </location>
</feature>
<feature type="domain" description="UBC core" evidence="2">
    <location>
        <begin position="57"/>
        <end position="217"/>
    </location>
</feature>
<feature type="active site" description="Glycyl thioester intermediate" evidence="2">
    <location>
        <position position="143"/>
    </location>
</feature>
<accession>F4HPP7</accession>
<accession>Q9C917</accession>
<sequence length="316" mass="36488">MVEIKDSSNVRKLKEEFLRDFKRFDTVEDFSDHHYAAEGSPAKLSLWHLKFKGRPKNWVKDIQKEWKILDKNLPETIFVRACESRIDLLRAVIIGAEGTPYHDGLFFFDIQFPDTYPSVPPKVHYHSGGLRINPNLYKCGKVCLSLISTWTGKKREKWLPKESTMLQLLVSIQALILNEKPYYNEPGYEKSMGTPLGESYSKDYSENVFVFSLKTMHFEEFVRSHFFVRSHDIVKACNAYKDGAPVGSIDKGGVKKQTRQRGSLKFRINVTSFMKTVVDEFVNLGAIREANHRGEPNPTLFSCFFFCYLELIICSV</sequence>
<gene>
    <name type="primary">UBC39</name>
    <name type="ordered locus">At1g53023</name>
    <name type="ORF">F14G24.31</name>
    <name type="ORF">F8L10</name>
</gene>
<comment type="function">
    <text evidence="1">Accepts the ubiquitin from the E1 complex and catalyzes its covalent attachment to other proteins.</text>
</comment>
<comment type="catalytic activity">
    <reaction evidence="2">
        <text>S-ubiquitinyl-[E1 ubiquitin-activating enzyme]-L-cysteine + [E2 ubiquitin-conjugating enzyme]-L-cysteine = [E1 ubiquitin-activating enzyme]-L-cysteine + S-ubiquitinyl-[E2 ubiquitin-conjugating enzyme]-L-cysteine.</text>
        <dbReference type="EC" id="2.3.2.23"/>
    </reaction>
</comment>
<comment type="pathway">
    <text evidence="2">Protein modification; protein ubiquitination.</text>
</comment>
<comment type="similarity">
    <text evidence="2">Belongs to the ubiquitin-conjugating enzyme family.</text>
</comment>
<comment type="sequence caution" evidence="3">
    <conflict type="erroneous gene model prediction">
        <sequence resource="EMBL-CDS" id="AAG52279"/>
    </conflict>
</comment>
<name>UBC39_ARATH</name>
<evidence type="ECO:0000250" key="1">
    <source>
        <dbReference type="UniProtKB" id="P42743"/>
    </source>
</evidence>
<evidence type="ECO:0000255" key="2">
    <source>
        <dbReference type="PROSITE-ProRule" id="PRU00388"/>
    </source>
</evidence>
<evidence type="ECO:0000305" key="3"/>
<proteinExistence type="inferred from homology"/>
<keyword id="KW-0067">ATP-binding</keyword>
<keyword id="KW-0547">Nucleotide-binding</keyword>
<keyword id="KW-1185">Reference proteome</keyword>
<keyword id="KW-0808">Transferase</keyword>
<keyword id="KW-0833">Ubl conjugation pathway</keyword>
<reference key="1">
    <citation type="journal article" date="2000" name="Nature">
        <title>Sequence and analysis of chromosome 1 of the plant Arabidopsis thaliana.</title>
        <authorList>
            <person name="Theologis A."/>
            <person name="Ecker J.R."/>
            <person name="Palm C.J."/>
            <person name="Federspiel N.A."/>
            <person name="Kaul S."/>
            <person name="White O."/>
            <person name="Alonso J."/>
            <person name="Altafi H."/>
            <person name="Araujo R."/>
            <person name="Bowman C.L."/>
            <person name="Brooks S.Y."/>
            <person name="Buehler E."/>
            <person name="Chan A."/>
            <person name="Chao Q."/>
            <person name="Chen H."/>
            <person name="Cheuk R.F."/>
            <person name="Chin C.W."/>
            <person name="Chung M.K."/>
            <person name="Conn L."/>
            <person name="Conway A.B."/>
            <person name="Conway A.R."/>
            <person name="Creasy T.H."/>
            <person name="Dewar K."/>
            <person name="Dunn P."/>
            <person name="Etgu P."/>
            <person name="Feldblyum T.V."/>
            <person name="Feng J.-D."/>
            <person name="Fong B."/>
            <person name="Fujii C.Y."/>
            <person name="Gill J.E."/>
            <person name="Goldsmith A.D."/>
            <person name="Haas B."/>
            <person name="Hansen N.F."/>
            <person name="Hughes B."/>
            <person name="Huizar L."/>
            <person name="Hunter J.L."/>
            <person name="Jenkins J."/>
            <person name="Johnson-Hopson C."/>
            <person name="Khan S."/>
            <person name="Khaykin E."/>
            <person name="Kim C.J."/>
            <person name="Koo H.L."/>
            <person name="Kremenetskaia I."/>
            <person name="Kurtz D.B."/>
            <person name="Kwan A."/>
            <person name="Lam B."/>
            <person name="Langin-Hooper S."/>
            <person name="Lee A."/>
            <person name="Lee J.M."/>
            <person name="Lenz C.A."/>
            <person name="Li J.H."/>
            <person name="Li Y.-P."/>
            <person name="Lin X."/>
            <person name="Liu S.X."/>
            <person name="Liu Z.A."/>
            <person name="Luros J.S."/>
            <person name="Maiti R."/>
            <person name="Marziali A."/>
            <person name="Militscher J."/>
            <person name="Miranda M."/>
            <person name="Nguyen M."/>
            <person name="Nierman W.C."/>
            <person name="Osborne B.I."/>
            <person name="Pai G."/>
            <person name="Peterson J."/>
            <person name="Pham P.K."/>
            <person name="Rizzo M."/>
            <person name="Rooney T."/>
            <person name="Rowley D."/>
            <person name="Sakano H."/>
            <person name="Salzberg S.L."/>
            <person name="Schwartz J.R."/>
            <person name="Shinn P."/>
            <person name="Southwick A.M."/>
            <person name="Sun H."/>
            <person name="Tallon L.J."/>
            <person name="Tambunga G."/>
            <person name="Toriumi M.J."/>
            <person name="Town C.D."/>
            <person name="Utterback T."/>
            <person name="Van Aken S."/>
            <person name="Vaysberg M."/>
            <person name="Vysotskaia V.S."/>
            <person name="Walker M."/>
            <person name="Wu D."/>
            <person name="Yu G."/>
            <person name="Fraser C.M."/>
            <person name="Venter J.C."/>
            <person name="Davis R.W."/>
        </authorList>
    </citation>
    <scope>NUCLEOTIDE SEQUENCE [LARGE SCALE GENOMIC DNA]</scope>
    <source>
        <strain>cv. Columbia</strain>
    </source>
</reference>
<reference key="2">
    <citation type="journal article" date="2017" name="Plant J.">
        <title>Araport11: a complete reannotation of the Arabidopsis thaliana reference genome.</title>
        <authorList>
            <person name="Cheng C.Y."/>
            <person name="Krishnakumar V."/>
            <person name="Chan A.P."/>
            <person name="Thibaud-Nissen F."/>
            <person name="Schobel S."/>
            <person name="Town C.D."/>
        </authorList>
    </citation>
    <scope>GENOME REANNOTATION</scope>
    <source>
        <strain>cv. Columbia</strain>
    </source>
</reference>
<reference key="3">
    <citation type="journal article" date="2005" name="Plant Physiol.">
        <title>Genome analysis and functional characterization of the E2 and RING-type E3 ligase ubiquitination enzymes of Arabidopsis.</title>
        <authorList>
            <person name="Kraft E."/>
            <person name="Stone S.L."/>
            <person name="Ma L."/>
            <person name="Su N."/>
            <person name="Gao Y."/>
            <person name="Lau O.-S."/>
            <person name="Deng X.-W."/>
            <person name="Callis J."/>
        </authorList>
    </citation>
    <scope>GENE FAMILY</scope>
    <scope>NOMENCLATURE</scope>
</reference>
<protein>
    <recommendedName>
        <fullName>Putative ubiquitin-conjugating enzyme E2 39</fullName>
        <ecNumber>2.3.2.23</ecNumber>
    </recommendedName>
    <alternativeName>
        <fullName>E2 ubiquitin-conjugating enzyme 39</fullName>
    </alternativeName>
    <alternativeName>
        <fullName>Ubiquitin carrier protein 39</fullName>
    </alternativeName>
</protein>
<organism>
    <name type="scientific">Arabidopsis thaliana</name>
    <name type="common">Mouse-ear cress</name>
    <dbReference type="NCBI Taxonomy" id="3702"/>
    <lineage>
        <taxon>Eukaryota</taxon>
        <taxon>Viridiplantae</taxon>
        <taxon>Streptophyta</taxon>
        <taxon>Embryophyta</taxon>
        <taxon>Tracheophyta</taxon>
        <taxon>Spermatophyta</taxon>
        <taxon>Magnoliopsida</taxon>
        <taxon>eudicotyledons</taxon>
        <taxon>Gunneridae</taxon>
        <taxon>Pentapetalae</taxon>
        <taxon>rosids</taxon>
        <taxon>malvids</taxon>
        <taxon>Brassicales</taxon>
        <taxon>Brassicaceae</taxon>
        <taxon>Camelineae</taxon>
        <taxon>Arabidopsis</taxon>
    </lineage>
</organism>